<protein>
    <recommendedName>
        <fullName evidence="1">Gamma-glutamyl phosphate reductase</fullName>
        <shortName evidence="1">GPR</shortName>
        <ecNumber evidence="1">1.2.1.41</ecNumber>
    </recommendedName>
    <alternativeName>
        <fullName evidence="1">Glutamate-5-semialdehyde dehydrogenase</fullName>
    </alternativeName>
    <alternativeName>
        <fullName evidence="1">Glutamyl-gamma-semialdehyde dehydrogenase</fullName>
        <shortName evidence="1">GSA dehydrogenase</shortName>
    </alternativeName>
</protein>
<accession>Q13U85</accession>
<organism>
    <name type="scientific">Paraburkholderia xenovorans (strain LB400)</name>
    <dbReference type="NCBI Taxonomy" id="266265"/>
    <lineage>
        <taxon>Bacteria</taxon>
        <taxon>Pseudomonadati</taxon>
        <taxon>Pseudomonadota</taxon>
        <taxon>Betaproteobacteria</taxon>
        <taxon>Burkholderiales</taxon>
        <taxon>Burkholderiaceae</taxon>
        <taxon>Paraburkholderia</taxon>
    </lineage>
</organism>
<name>PROA_PARXL</name>
<sequence>MDIDQYMTDLGRRARQASRAMARASTAAKNAALAAVAEAIERDAASLKEANARDVAKAREKGHDAAFIDRLTLSDKALKTMVEGLRQVAALADPIGEISNLKYRPSGIQVGQMRVPLGVIGIIYESRPNVTIDAAALCLKSGNATILRGGSEALECNTALAKLIGEGLEAAGLPQDAVQVVATSDRAAVGKLITMTEYVDVIVPRGGKSLIERLMNEARVPMIKHLDGICHVYVDDRADLTKALTVCDNAKTHRYGTCNTMETLLVARGIAAEVLPPLGKLYRDKQVELRVDAAARAVLADAGVGPLGDATEEDWRTEYLAPVLAIKVVDDLDAAIEHINEYSSQHTDAIVTEDHDRAMRFLREVDSASVMVNASTRFADGFEFGLGAEIGISNDKLHARGPVGLEGLTSLKYVVLGHGEGRQ</sequence>
<comment type="function">
    <text evidence="1">Catalyzes the NADPH-dependent reduction of L-glutamate 5-phosphate into L-glutamate 5-semialdehyde and phosphate. The product spontaneously undergoes cyclization to form 1-pyrroline-5-carboxylate.</text>
</comment>
<comment type="catalytic activity">
    <reaction evidence="1">
        <text>L-glutamate 5-semialdehyde + phosphate + NADP(+) = L-glutamyl 5-phosphate + NADPH + H(+)</text>
        <dbReference type="Rhea" id="RHEA:19541"/>
        <dbReference type="ChEBI" id="CHEBI:15378"/>
        <dbReference type="ChEBI" id="CHEBI:43474"/>
        <dbReference type="ChEBI" id="CHEBI:57783"/>
        <dbReference type="ChEBI" id="CHEBI:58066"/>
        <dbReference type="ChEBI" id="CHEBI:58274"/>
        <dbReference type="ChEBI" id="CHEBI:58349"/>
        <dbReference type="EC" id="1.2.1.41"/>
    </reaction>
</comment>
<comment type="pathway">
    <text evidence="1">Amino-acid biosynthesis; L-proline biosynthesis; L-glutamate 5-semialdehyde from L-glutamate: step 2/2.</text>
</comment>
<comment type="subcellular location">
    <subcellularLocation>
        <location evidence="1">Cytoplasm</location>
    </subcellularLocation>
</comment>
<comment type="similarity">
    <text evidence="1">Belongs to the gamma-glutamyl phosphate reductase family.</text>
</comment>
<gene>
    <name evidence="1" type="primary">proA</name>
    <name type="ordered locus">Bxeno_A3816</name>
    <name type="ORF">Bxe_A0579</name>
</gene>
<proteinExistence type="inferred from homology"/>
<reference key="1">
    <citation type="journal article" date="2006" name="Proc. Natl. Acad. Sci. U.S.A.">
        <title>Burkholderia xenovorans LB400 harbors a multi-replicon, 9.73-Mbp genome shaped for versatility.</title>
        <authorList>
            <person name="Chain P.S.G."/>
            <person name="Denef V.J."/>
            <person name="Konstantinidis K.T."/>
            <person name="Vergez L.M."/>
            <person name="Agullo L."/>
            <person name="Reyes V.L."/>
            <person name="Hauser L."/>
            <person name="Cordova M."/>
            <person name="Gomez L."/>
            <person name="Gonzalez M."/>
            <person name="Land M."/>
            <person name="Lao V."/>
            <person name="Larimer F."/>
            <person name="LiPuma J.J."/>
            <person name="Mahenthiralingam E."/>
            <person name="Malfatti S.A."/>
            <person name="Marx C.J."/>
            <person name="Parnell J.J."/>
            <person name="Ramette A."/>
            <person name="Richardson P."/>
            <person name="Seeger M."/>
            <person name="Smith D."/>
            <person name="Spilker T."/>
            <person name="Sul W.J."/>
            <person name="Tsoi T.V."/>
            <person name="Ulrich L.E."/>
            <person name="Zhulin I.B."/>
            <person name="Tiedje J.M."/>
        </authorList>
    </citation>
    <scope>NUCLEOTIDE SEQUENCE [LARGE SCALE GENOMIC DNA]</scope>
    <source>
        <strain>LB400</strain>
    </source>
</reference>
<dbReference type="EC" id="1.2.1.41" evidence="1"/>
<dbReference type="EMBL" id="CP000270">
    <property type="protein sequence ID" value="ABE32354.1"/>
    <property type="molecule type" value="Genomic_DNA"/>
</dbReference>
<dbReference type="RefSeq" id="WP_011489834.1">
    <property type="nucleotide sequence ID" value="NC_007951.1"/>
</dbReference>
<dbReference type="SMR" id="Q13U85"/>
<dbReference type="STRING" id="266265.Bxe_A0579"/>
<dbReference type="KEGG" id="bxb:DR64_2752"/>
<dbReference type="KEGG" id="bxe:Bxe_A0579"/>
<dbReference type="PATRIC" id="fig|266265.5.peg.4032"/>
<dbReference type="eggNOG" id="COG0014">
    <property type="taxonomic scope" value="Bacteria"/>
</dbReference>
<dbReference type="OrthoDB" id="9809970at2"/>
<dbReference type="UniPathway" id="UPA00098">
    <property type="reaction ID" value="UER00360"/>
</dbReference>
<dbReference type="Proteomes" id="UP000001817">
    <property type="component" value="Chromosome 1"/>
</dbReference>
<dbReference type="GO" id="GO:0005737">
    <property type="term" value="C:cytoplasm"/>
    <property type="evidence" value="ECO:0007669"/>
    <property type="project" value="UniProtKB-SubCell"/>
</dbReference>
<dbReference type="GO" id="GO:0004350">
    <property type="term" value="F:glutamate-5-semialdehyde dehydrogenase activity"/>
    <property type="evidence" value="ECO:0007669"/>
    <property type="project" value="UniProtKB-UniRule"/>
</dbReference>
<dbReference type="GO" id="GO:0050661">
    <property type="term" value="F:NADP binding"/>
    <property type="evidence" value="ECO:0007669"/>
    <property type="project" value="InterPro"/>
</dbReference>
<dbReference type="GO" id="GO:0055129">
    <property type="term" value="P:L-proline biosynthetic process"/>
    <property type="evidence" value="ECO:0007669"/>
    <property type="project" value="UniProtKB-UniRule"/>
</dbReference>
<dbReference type="CDD" id="cd07079">
    <property type="entry name" value="ALDH_F18-19_ProA-GPR"/>
    <property type="match status" value="1"/>
</dbReference>
<dbReference type="FunFam" id="3.40.309.10:FF:000006">
    <property type="entry name" value="Gamma-glutamyl phosphate reductase"/>
    <property type="match status" value="1"/>
</dbReference>
<dbReference type="Gene3D" id="3.40.605.10">
    <property type="entry name" value="Aldehyde Dehydrogenase, Chain A, domain 1"/>
    <property type="match status" value="1"/>
</dbReference>
<dbReference type="Gene3D" id="3.40.309.10">
    <property type="entry name" value="Aldehyde Dehydrogenase, Chain A, domain 2"/>
    <property type="match status" value="1"/>
</dbReference>
<dbReference type="HAMAP" id="MF_00412">
    <property type="entry name" value="ProA"/>
    <property type="match status" value="1"/>
</dbReference>
<dbReference type="InterPro" id="IPR016161">
    <property type="entry name" value="Ald_DH/histidinol_DH"/>
</dbReference>
<dbReference type="InterPro" id="IPR016163">
    <property type="entry name" value="Ald_DH_C"/>
</dbReference>
<dbReference type="InterPro" id="IPR016162">
    <property type="entry name" value="Ald_DH_N"/>
</dbReference>
<dbReference type="InterPro" id="IPR015590">
    <property type="entry name" value="Aldehyde_DH_dom"/>
</dbReference>
<dbReference type="InterPro" id="IPR020593">
    <property type="entry name" value="G-glutamylP_reductase_CS"/>
</dbReference>
<dbReference type="InterPro" id="IPR012134">
    <property type="entry name" value="Glu-5-SA_DH"/>
</dbReference>
<dbReference type="InterPro" id="IPR000965">
    <property type="entry name" value="GPR_dom"/>
</dbReference>
<dbReference type="NCBIfam" id="NF001221">
    <property type="entry name" value="PRK00197.1"/>
    <property type="match status" value="1"/>
</dbReference>
<dbReference type="NCBIfam" id="TIGR00407">
    <property type="entry name" value="proA"/>
    <property type="match status" value="1"/>
</dbReference>
<dbReference type="PANTHER" id="PTHR11063:SF8">
    <property type="entry name" value="DELTA-1-PYRROLINE-5-CARBOXYLATE SYNTHASE"/>
    <property type="match status" value="1"/>
</dbReference>
<dbReference type="PANTHER" id="PTHR11063">
    <property type="entry name" value="GLUTAMATE SEMIALDEHYDE DEHYDROGENASE"/>
    <property type="match status" value="1"/>
</dbReference>
<dbReference type="Pfam" id="PF00171">
    <property type="entry name" value="Aldedh"/>
    <property type="match status" value="2"/>
</dbReference>
<dbReference type="PIRSF" id="PIRSF000151">
    <property type="entry name" value="GPR"/>
    <property type="match status" value="1"/>
</dbReference>
<dbReference type="SUPFAM" id="SSF53720">
    <property type="entry name" value="ALDH-like"/>
    <property type="match status" value="1"/>
</dbReference>
<dbReference type="PROSITE" id="PS01223">
    <property type="entry name" value="PROA"/>
    <property type="match status" value="1"/>
</dbReference>
<feature type="chain" id="PRO_0000252567" description="Gamma-glutamyl phosphate reductase">
    <location>
        <begin position="1"/>
        <end position="423"/>
    </location>
</feature>
<keyword id="KW-0028">Amino-acid biosynthesis</keyword>
<keyword id="KW-0963">Cytoplasm</keyword>
<keyword id="KW-0521">NADP</keyword>
<keyword id="KW-0560">Oxidoreductase</keyword>
<keyword id="KW-0641">Proline biosynthesis</keyword>
<keyword id="KW-1185">Reference proteome</keyword>
<evidence type="ECO:0000255" key="1">
    <source>
        <dbReference type="HAMAP-Rule" id="MF_00412"/>
    </source>
</evidence>